<evidence type="ECO:0000250" key="1">
    <source>
        <dbReference type="UniProtKB" id="P04798"/>
    </source>
</evidence>
<evidence type="ECO:0000255" key="2"/>
<evidence type="ECO:0000255" key="3">
    <source>
        <dbReference type="PROSITE-ProRule" id="PRU00498"/>
    </source>
</evidence>
<evidence type="ECO:0000269" key="4">
    <source>
    </source>
</evidence>
<evidence type="ECO:0000269" key="5">
    <source>
    </source>
</evidence>
<evidence type="ECO:0000269" key="6">
    <source>
    </source>
</evidence>
<evidence type="ECO:0000303" key="7">
    <source>
    </source>
</evidence>
<evidence type="ECO:0000305" key="8"/>
<evidence type="ECO:0000305" key="9">
    <source>
    </source>
</evidence>
<evidence type="ECO:0000305" key="10">
    <source>
    </source>
</evidence>
<accession>A0A384JQG4</accession>
<sequence>MSNSILNLGSFACLLSLGSIVLWYTISAVLAWYPLRKIPAPSFLATFSYLWLAKTTYSGKQYWIQRDLHKKYGPLVRIGPTDIITDDPEIIKKISSARSSHRRGDWYLTGRFNPYYDNMFTMLEPGPHAKAKARTAAAYSGRDMPDLEVGVNAQLQTLIGLMRSKYASNTVKPHQPLLDLGQVSCFFTMDVITRLAFGEEFGYLKEETDQYGFLGEVRELWPRMSTSADTPWIRKFLFSPPFLKVLGPKPTDKTGFGALMAVAEHHVGKRFAPDAKKKEDMLGSFIRHGLNQQECEVEGLFMIVAGTESTASAIRSTLVHVMTCPRVYQKLKTEINLAVEEGKVSSPIKLEEAKLLPFLQAVIYEGIRMRPPLLGLFPKIVPDGGEEFHGMFIPAGTAICMNTSSLLRSTALFGDDAEVYRPERFMELEKSKRGEMERNVELAFGYGQYMCVGKTVAFMELNKSIFEILRAFDLQLLSPAKPCDVLSYGIFLESNMLVKVTESEGTEYK</sequence>
<reference key="1">
    <citation type="journal article" date="2011" name="PLoS Genet.">
        <title>Genomic analysis of the necrotrophic fungal pathogens Sclerotinia sclerotiorum and Botrytis cinerea.</title>
        <authorList>
            <person name="Amselem J."/>
            <person name="Cuomo C.A."/>
            <person name="van Kan J.A.L."/>
            <person name="Viaud M."/>
            <person name="Benito E.P."/>
            <person name="Couloux A."/>
            <person name="Coutinho P.M."/>
            <person name="de Vries R.P."/>
            <person name="Dyer P.S."/>
            <person name="Fillinger S."/>
            <person name="Fournier E."/>
            <person name="Gout L."/>
            <person name="Hahn M."/>
            <person name="Kohn L."/>
            <person name="Lapalu N."/>
            <person name="Plummer K.M."/>
            <person name="Pradier J.-M."/>
            <person name="Quevillon E."/>
            <person name="Sharon A."/>
            <person name="Simon A."/>
            <person name="ten Have A."/>
            <person name="Tudzynski B."/>
            <person name="Tudzynski P."/>
            <person name="Wincker P."/>
            <person name="Andrew M."/>
            <person name="Anthouard V."/>
            <person name="Beever R.E."/>
            <person name="Beffa R."/>
            <person name="Benoit I."/>
            <person name="Bouzid O."/>
            <person name="Brault B."/>
            <person name="Chen Z."/>
            <person name="Choquer M."/>
            <person name="Collemare J."/>
            <person name="Cotton P."/>
            <person name="Danchin E.G."/>
            <person name="Da Silva C."/>
            <person name="Gautier A."/>
            <person name="Giraud C."/>
            <person name="Giraud T."/>
            <person name="Gonzalez C."/>
            <person name="Grossetete S."/>
            <person name="Gueldener U."/>
            <person name="Henrissat B."/>
            <person name="Howlett B.J."/>
            <person name="Kodira C."/>
            <person name="Kretschmer M."/>
            <person name="Lappartient A."/>
            <person name="Leroch M."/>
            <person name="Levis C."/>
            <person name="Mauceli E."/>
            <person name="Neuveglise C."/>
            <person name="Oeser B."/>
            <person name="Pearson M."/>
            <person name="Poulain J."/>
            <person name="Poussereau N."/>
            <person name="Quesneville H."/>
            <person name="Rascle C."/>
            <person name="Schumacher J."/>
            <person name="Segurens B."/>
            <person name="Sexton A."/>
            <person name="Silva E."/>
            <person name="Sirven C."/>
            <person name="Soanes D.M."/>
            <person name="Talbot N.J."/>
            <person name="Templeton M."/>
            <person name="Yandava C."/>
            <person name="Yarden O."/>
            <person name="Zeng Q."/>
            <person name="Rollins J.A."/>
            <person name="Lebrun M.-H."/>
            <person name="Dickman M."/>
        </authorList>
    </citation>
    <scope>NUCLEOTIDE SEQUENCE [LARGE SCALE GENOMIC DNA]</scope>
    <source>
        <strain>B05.10</strain>
    </source>
</reference>
<reference key="2">
    <citation type="journal article" date="2012" name="Eukaryot. Cell">
        <title>Genome update of Botrytis cinerea strains B05.10 and T4.</title>
        <authorList>
            <person name="Staats M."/>
            <person name="van Kan J.A.L."/>
        </authorList>
    </citation>
    <scope>NUCLEOTIDE SEQUENCE [LARGE SCALE GENOMIC DNA]</scope>
    <source>
        <strain>B05.10</strain>
    </source>
</reference>
<reference key="3">
    <citation type="journal article" date="2017" name="Mol. Plant Pathol.">
        <title>A gapless genome sequence of the fungus Botrytis cinerea.</title>
        <authorList>
            <person name="van Kan J.A.L."/>
            <person name="Stassen J.H.M."/>
            <person name="Mosbach A."/>
            <person name="van der Lee T.A.J."/>
            <person name="Faino L."/>
            <person name="Farmer A.D."/>
            <person name="Papasotiriou D.G."/>
            <person name="Zhou S."/>
            <person name="Seidl M.F."/>
            <person name="Cottam E."/>
            <person name="Edel D."/>
            <person name="Hahn M."/>
            <person name="Schwartz D.C."/>
            <person name="Dietrich R.A."/>
            <person name="Widdison S."/>
            <person name="Scalliet G."/>
        </authorList>
    </citation>
    <scope>NUCLEOTIDE SEQUENCE [LARGE SCALE GENOMIC DNA]</scope>
    <source>
        <strain>B05.10</strain>
    </source>
</reference>
<reference key="4">
    <citation type="journal article" date="2004" name="Appl. Environ. Microbiol.">
        <title>The P450 monooxygenase BcABA1 is essential for abscisic acid biosynthesis in Botrytis cinerea.</title>
        <authorList>
            <person name="Siewers V."/>
            <person name="Smedsgaard J."/>
            <person name="Tudzynski P."/>
        </authorList>
    </citation>
    <scope>INDUCTION</scope>
    <scope>FUNCTION</scope>
    <scope>DISRUPTION PHENOTYPE</scope>
    <scope>PATHWAY</scope>
</reference>
<reference key="5">
    <citation type="journal article" date="2006" name="Appl. Environ. Microbiol.">
        <title>Identification of an abscisic acid gene cluster in the grey mold Botrytis cinerea.</title>
        <authorList>
            <person name="Siewers V."/>
            <person name="Kokkelink L."/>
            <person name="Smedsgaard J."/>
            <person name="Tudzynski P."/>
        </authorList>
    </citation>
    <scope>INDUCTION</scope>
    <scope>FUNCTION</scope>
</reference>
<reference key="6">
    <citation type="journal article" date="2018" name="J. Am. Chem. Soc.">
        <title>Unveiling biosynthesis of the phytohormone abscisic acid in fungi: unprecedented mechanism of core scaffold formation catalyzed by an unusual sesquiterpene synthase.</title>
        <authorList>
            <person name="Takino J."/>
            <person name="Kozaki T."/>
            <person name="Sato Y."/>
            <person name="Liu C."/>
            <person name="Ozaki T."/>
            <person name="Minami A."/>
            <person name="Oikawa H."/>
        </authorList>
    </citation>
    <scope>FUNCTION</scope>
</reference>
<keyword id="KW-0325">Glycoprotein</keyword>
<keyword id="KW-0349">Heme</keyword>
<keyword id="KW-0408">Iron</keyword>
<keyword id="KW-0479">Metal-binding</keyword>
<keyword id="KW-0503">Monooxygenase</keyword>
<keyword id="KW-0560">Oxidoreductase</keyword>
<keyword id="KW-1185">Reference proteome</keyword>
<keyword id="KW-0732">Signal</keyword>
<keyword id="KW-0843">Virulence</keyword>
<name>ABA1_BOTFB</name>
<gene>
    <name type="primary">aba1</name>
    <name type="ORF">BCIN_08g03850</name>
</gene>
<organism>
    <name type="scientific">Botryotinia fuckeliana (strain B05.10)</name>
    <name type="common">Noble rot fungus</name>
    <name type="synonym">Botrytis cinerea</name>
    <dbReference type="NCBI Taxonomy" id="332648"/>
    <lineage>
        <taxon>Eukaryota</taxon>
        <taxon>Fungi</taxon>
        <taxon>Dikarya</taxon>
        <taxon>Ascomycota</taxon>
        <taxon>Pezizomycotina</taxon>
        <taxon>Leotiomycetes</taxon>
        <taxon>Helotiales</taxon>
        <taxon>Sclerotiniaceae</taxon>
        <taxon>Botrytis</taxon>
    </lineage>
</organism>
<proteinExistence type="evidence at transcript level"/>
<protein>
    <recommendedName>
        <fullName evidence="7">Cytochrome P450 monooxygenase aba1</fullName>
        <ecNumber evidence="9">1.-.-.-</ecNumber>
    </recommendedName>
    <alternativeName>
        <fullName evidence="7">Abscisic acid biosynthesis cluster protein 2</fullName>
    </alternativeName>
</protein>
<dbReference type="EC" id="1.-.-.-" evidence="9"/>
<dbReference type="EMBL" id="CP009812">
    <property type="protein sequence ID" value="ATZ52742.1"/>
    <property type="molecule type" value="Genomic_DNA"/>
</dbReference>
<dbReference type="SMR" id="A0A384JQG4"/>
<dbReference type="GlyCosmos" id="A0A384JQG4">
    <property type="glycosylation" value="2 sites, No reported glycans"/>
</dbReference>
<dbReference type="EnsemblFungi" id="Bcin08g03850.1">
    <property type="protein sequence ID" value="Bcin08p03850.1"/>
    <property type="gene ID" value="Bcin08g03850"/>
</dbReference>
<dbReference type="VEuPathDB" id="FungiDB:Bcin08g03850"/>
<dbReference type="OrthoDB" id="1470350at2759"/>
<dbReference type="Proteomes" id="UP000001798">
    <property type="component" value="Chromosome bcin08"/>
</dbReference>
<dbReference type="GO" id="GO:0020037">
    <property type="term" value="F:heme binding"/>
    <property type="evidence" value="ECO:0007669"/>
    <property type="project" value="InterPro"/>
</dbReference>
<dbReference type="GO" id="GO:0005506">
    <property type="term" value="F:iron ion binding"/>
    <property type="evidence" value="ECO:0007669"/>
    <property type="project" value="InterPro"/>
</dbReference>
<dbReference type="GO" id="GO:0004497">
    <property type="term" value="F:monooxygenase activity"/>
    <property type="evidence" value="ECO:0007669"/>
    <property type="project" value="UniProtKB-KW"/>
</dbReference>
<dbReference type="GO" id="GO:0016705">
    <property type="term" value="F:oxidoreductase activity, acting on paired donors, with incorporation or reduction of molecular oxygen"/>
    <property type="evidence" value="ECO:0007669"/>
    <property type="project" value="InterPro"/>
</dbReference>
<dbReference type="GO" id="GO:0009688">
    <property type="term" value="P:abscisic acid biosynthetic process"/>
    <property type="evidence" value="ECO:0000315"/>
    <property type="project" value="GO_Central"/>
</dbReference>
<dbReference type="CDD" id="cd11060">
    <property type="entry name" value="CYP57A1-like"/>
    <property type="match status" value="1"/>
</dbReference>
<dbReference type="Gene3D" id="1.10.630.10">
    <property type="entry name" value="Cytochrome P450"/>
    <property type="match status" value="1"/>
</dbReference>
<dbReference type="InterPro" id="IPR001128">
    <property type="entry name" value="Cyt_P450"/>
</dbReference>
<dbReference type="InterPro" id="IPR002401">
    <property type="entry name" value="Cyt_P450_E_grp-I"/>
</dbReference>
<dbReference type="InterPro" id="IPR036396">
    <property type="entry name" value="Cyt_P450_sf"/>
</dbReference>
<dbReference type="InterPro" id="IPR050121">
    <property type="entry name" value="Cytochrome_P450_monoxygenase"/>
</dbReference>
<dbReference type="PANTHER" id="PTHR24305">
    <property type="entry name" value="CYTOCHROME P450"/>
    <property type="match status" value="1"/>
</dbReference>
<dbReference type="PANTHER" id="PTHR24305:SF77">
    <property type="entry name" value="CYTOCHROME P450 MONOOXYGENASE"/>
    <property type="match status" value="1"/>
</dbReference>
<dbReference type="Pfam" id="PF00067">
    <property type="entry name" value="p450"/>
    <property type="match status" value="1"/>
</dbReference>
<dbReference type="PRINTS" id="PR00463">
    <property type="entry name" value="EP450I"/>
</dbReference>
<dbReference type="PRINTS" id="PR00385">
    <property type="entry name" value="P450"/>
</dbReference>
<dbReference type="SUPFAM" id="SSF48264">
    <property type="entry name" value="Cytochrome P450"/>
    <property type="match status" value="1"/>
</dbReference>
<comment type="function">
    <text evidence="4 5 6 10">Cytochrome P450 monooxygenase; part of the gene cluster that mediates the biosynthesis of abscisic acid (ABA), a phytohormone that acts antagonistically toward salicylic acid (SA), jasmonic acid (JA) and ethylene (ETH) signaling, to impede plant defense responses (PubMed:15240257, PubMed:16820452). The first step of the pathway catalyzes the reaction from farnesyl diphosphate to alpha-ionylideneethane performed by the alpha-ionylideneethane synthase aba3 via a three-step reaction mechanism involving 2 neutral intermediates, beta-farnesene and allofarnesene (PubMed:30226766). The cytochrome P450 monooxygenase aba1 might then be involved in the conversion of alpha-ionylideneethane to alpha-ionylideneacetic acid (Probable). Alpha-ionylideneacetic acid is further converted to abscisic acid in 2 steps involving the cytochrome P450 monooxygenase aba2 and the short-chain dehydrogenase/reductase aba4, via the intermediates 1'-deoxy-ABA or 1',4'-trans-diol-ABA, depending on the order of action of these 2 enzymes (Probable). Aba2 is responsible for the hydroxylation of carbon atom C-1' and aba4 might be involved in the oxidation of the C-4' carbon atom (PubMed:16820452).</text>
</comment>
<comment type="cofactor">
    <cofactor evidence="1">
        <name>heme</name>
        <dbReference type="ChEBI" id="CHEBI:30413"/>
    </cofactor>
</comment>
<comment type="pathway">
    <text evidence="4">Hormone biosynthesis.</text>
</comment>
<comment type="induction">
    <text evidence="5">Expression is persistently induced 90 minutes after the addition of the ABA precursor mevalonic acid (MVA) to the medium.</text>
</comment>
<comment type="disruption phenotype">
    <text evidence="4">Impairs the production of abscisic acid (ABA).</text>
</comment>
<comment type="similarity">
    <text evidence="8">Belongs to the cytochrome P450 family.</text>
</comment>
<feature type="signal peptide" evidence="2">
    <location>
        <begin position="1"/>
        <end position="31"/>
    </location>
</feature>
<feature type="chain" id="PRO_0000448411" description="Cytochrome P450 monooxygenase aba1">
    <location>
        <begin position="32"/>
        <end position="509"/>
    </location>
</feature>
<feature type="binding site" description="axial binding residue" evidence="1">
    <location>
        <position position="451"/>
    </location>
    <ligand>
        <name>heme</name>
        <dbReference type="ChEBI" id="CHEBI:30413"/>
    </ligand>
    <ligandPart>
        <name>Fe</name>
        <dbReference type="ChEBI" id="CHEBI:18248"/>
    </ligandPart>
</feature>
<feature type="glycosylation site" description="N-linked (GlcNAc...) asparagine" evidence="3">
    <location>
        <position position="402"/>
    </location>
</feature>
<feature type="glycosylation site" description="N-linked (GlcNAc...) asparagine" evidence="3">
    <location>
        <position position="462"/>
    </location>
</feature>